<organism>
    <name type="scientific">Brucella suis biovar 1 (strain 1330)</name>
    <dbReference type="NCBI Taxonomy" id="204722"/>
    <lineage>
        <taxon>Bacteria</taxon>
        <taxon>Pseudomonadati</taxon>
        <taxon>Pseudomonadota</taxon>
        <taxon>Alphaproteobacteria</taxon>
        <taxon>Hyphomicrobiales</taxon>
        <taxon>Brucellaceae</taxon>
        <taxon>Brucella/Ochrobactrum group</taxon>
        <taxon>Brucella</taxon>
    </lineage>
</organism>
<comment type="function">
    <text>Probably part of an ABC transporter complex.</text>
</comment>
<comment type="subunit">
    <text evidence="2">The complex is composed of two ATP-binding proteins (BRA1187), two transmembrane proteins (BRA1188) and a solute-binding protein (BRA1186).</text>
</comment>
<comment type="subcellular location">
    <subcellularLocation>
        <location evidence="2">Periplasm</location>
    </subcellularLocation>
</comment>
<comment type="similarity">
    <text evidence="2">Belongs to the bacterial solute-binding protein SsuA/TauA family.</text>
</comment>
<evidence type="ECO:0000255" key="1"/>
<evidence type="ECO:0000305" key="2"/>
<keyword id="KW-0574">Periplasm</keyword>
<keyword id="KW-0732">Signal</keyword>
<keyword id="KW-0813">Transport</keyword>
<dbReference type="EMBL" id="AE014292">
    <property type="protein sequence ID" value="AAN34344.1"/>
    <property type="molecule type" value="Genomic_DNA"/>
</dbReference>
<dbReference type="EMBL" id="CP002998">
    <property type="protein sequence ID" value="AEM20620.1"/>
    <property type="molecule type" value="Genomic_DNA"/>
</dbReference>
<dbReference type="PIR" id="AC3523">
    <property type="entry name" value="AC3523"/>
</dbReference>
<dbReference type="RefSeq" id="WP_002967147.1">
    <property type="nucleotide sequence ID" value="NZ_KN046805.1"/>
</dbReference>
<dbReference type="SMR" id="Q8FUN4"/>
<dbReference type="KEGG" id="bms:BRA1186"/>
<dbReference type="KEGG" id="bsi:BS1330_II1177"/>
<dbReference type="PATRIC" id="fig|204722.21.peg.278"/>
<dbReference type="HOGENOM" id="CLU_028871_3_0_5"/>
<dbReference type="PhylomeDB" id="Q8FUN4"/>
<dbReference type="Proteomes" id="UP000007104">
    <property type="component" value="Chromosome II"/>
</dbReference>
<dbReference type="GO" id="GO:0016020">
    <property type="term" value="C:membrane"/>
    <property type="evidence" value="ECO:0007669"/>
    <property type="project" value="InterPro"/>
</dbReference>
<dbReference type="GO" id="GO:0042597">
    <property type="term" value="C:periplasmic space"/>
    <property type="evidence" value="ECO:0007669"/>
    <property type="project" value="UniProtKB-SubCell"/>
</dbReference>
<dbReference type="GO" id="GO:0042626">
    <property type="term" value="F:ATPase-coupled transmembrane transporter activity"/>
    <property type="evidence" value="ECO:0007669"/>
    <property type="project" value="InterPro"/>
</dbReference>
<dbReference type="CDD" id="cd13561">
    <property type="entry name" value="PBP2_SsuA_like_4"/>
    <property type="match status" value="1"/>
</dbReference>
<dbReference type="Gene3D" id="3.40.190.10">
    <property type="entry name" value="Periplasmic binding protein-like II"/>
    <property type="match status" value="3"/>
</dbReference>
<dbReference type="InterPro" id="IPR010067">
    <property type="entry name" value="ABC_SsuA_sub-bd"/>
</dbReference>
<dbReference type="InterPro" id="IPR001638">
    <property type="entry name" value="Solute-binding_3/MltF_N"/>
</dbReference>
<dbReference type="InterPro" id="IPR015168">
    <property type="entry name" value="SsuA/THI5"/>
</dbReference>
<dbReference type="NCBIfam" id="TIGR01728">
    <property type="entry name" value="SsuA_fam"/>
    <property type="match status" value="1"/>
</dbReference>
<dbReference type="PANTHER" id="PTHR30024">
    <property type="entry name" value="ALIPHATIC SULFONATES-BINDING PROTEIN-RELATED"/>
    <property type="match status" value="1"/>
</dbReference>
<dbReference type="PANTHER" id="PTHR30024:SF47">
    <property type="entry name" value="TAURINE-BINDING PERIPLASMIC PROTEIN"/>
    <property type="match status" value="1"/>
</dbReference>
<dbReference type="Pfam" id="PF09084">
    <property type="entry name" value="NMT1"/>
    <property type="match status" value="1"/>
</dbReference>
<dbReference type="SMART" id="SM00062">
    <property type="entry name" value="PBPb"/>
    <property type="match status" value="1"/>
</dbReference>
<dbReference type="SUPFAM" id="SSF53850">
    <property type="entry name" value="Periplasmic binding protein-like II"/>
    <property type="match status" value="1"/>
</dbReference>
<gene>
    <name type="ordered locus">BRA1186</name>
    <name type="ordered locus">BS1330_II1177</name>
</gene>
<reference key="1">
    <citation type="journal article" date="2002" name="Proc. Natl. Acad. Sci. U.S.A.">
        <title>The Brucella suis genome reveals fundamental similarities between animal and plant pathogens and symbionts.</title>
        <authorList>
            <person name="Paulsen I.T."/>
            <person name="Seshadri R."/>
            <person name="Nelson K.E."/>
            <person name="Eisen J.A."/>
            <person name="Heidelberg J.F."/>
            <person name="Read T.D."/>
            <person name="Dodson R.J."/>
            <person name="Umayam L.A."/>
            <person name="Brinkac L.M."/>
            <person name="Beanan M.J."/>
            <person name="Daugherty S.C."/>
            <person name="DeBoy R.T."/>
            <person name="Durkin A.S."/>
            <person name="Kolonay J.F."/>
            <person name="Madupu R."/>
            <person name="Nelson W.C."/>
            <person name="Ayodeji B."/>
            <person name="Kraul M."/>
            <person name="Shetty J."/>
            <person name="Malek J.A."/>
            <person name="Van Aken S.E."/>
            <person name="Riedmuller S."/>
            <person name="Tettelin H."/>
            <person name="Gill S.R."/>
            <person name="White O."/>
            <person name="Salzberg S.L."/>
            <person name="Hoover D.L."/>
            <person name="Lindler L.E."/>
            <person name="Halling S.M."/>
            <person name="Boyle S.M."/>
            <person name="Fraser C.M."/>
        </authorList>
    </citation>
    <scope>NUCLEOTIDE SEQUENCE [LARGE SCALE GENOMIC DNA]</scope>
    <source>
        <strain>1330</strain>
    </source>
</reference>
<reference key="2">
    <citation type="journal article" date="2011" name="J. Bacteriol.">
        <title>Revised genome sequence of Brucella suis 1330.</title>
        <authorList>
            <person name="Tae H."/>
            <person name="Shallom S."/>
            <person name="Settlage R."/>
            <person name="Preston D."/>
            <person name="Adams L.G."/>
            <person name="Garner H.R."/>
        </authorList>
    </citation>
    <scope>NUCLEOTIDE SEQUENCE [LARGE SCALE GENOMIC DNA]</scope>
    <source>
        <strain>1330</strain>
    </source>
</reference>
<sequence length="319" mass="34450">MKRRTFLAMSLALTFLPSVALADNIPVRVGYIADYWGTSITAIASEKGLWEKHGLDADTRVFTNGPIQVQALGAGSLDFGYIGPGALWLPASGKAKIVAINSVGFSDRVIAQEGFKSMADLKGKKIGVPEGTSGDMLLRLALGKAGMKLDDVQVIKMDPSTVVSAFASKQIDAAGIWYPLIGTIKEHVPGMVELAANSDFFPDKTFPSAFIARNEIVAENPEAVKRMIAVIEEAEDFRTANPEQSVDITAKFLKVDKANLETEAKNGKSLTSEELVKLTRDGSVNGWLSGMADMFVTFGKLKSPLDPKDYYLADYFTAK</sequence>
<feature type="signal peptide" evidence="1">
    <location>
        <begin position="1"/>
        <end position="22"/>
    </location>
</feature>
<feature type="chain" id="PRO_0000284082" description="Putative binding protein BRA1186/BS1330_II1177">
    <location>
        <begin position="23"/>
        <end position="319"/>
    </location>
</feature>
<name>Y4186_BRUSU</name>
<protein>
    <recommendedName>
        <fullName>Putative binding protein BRA1186/BS1330_II1177</fullName>
    </recommendedName>
</protein>
<proteinExistence type="inferred from homology"/>
<accession>Q8FUN4</accession>
<accession>G0KEI2</accession>